<feature type="chain" id="PRO_0000259407" description="PTS system mannose-specific EIIAB component">
    <location>
        <begin position="1"/>
        <end position="330"/>
    </location>
</feature>
<feature type="domain" description="PTS EIIA type-4" evidence="2">
    <location>
        <begin position="2"/>
        <end position="130"/>
    </location>
</feature>
<feature type="domain" description="PTS EIIB type-4" evidence="3">
    <location>
        <begin position="166"/>
        <end position="330"/>
    </location>
</feature>
<feature type="region of interest" description="Hinge" evidence="1">
    <location>
        <begin position="143"/>
        <end position="161"/>
    </location>
</feature>
<feature type="active site" description="Tele-phosphohistidine intermediate; for EIIA activity" evidence="2">
    <location>
        <position position="10"/>
    </location>
</feature>
<feature type="active site" description="Pros-phosphohistidine intermediate; for EIIB activity" evidence="1">
    <location>
        <position position="181"/>
    </location>
</feature>
<feature type="site" description="Involved in the phosphoryl transfer between H-10 and H-175" evidence="1">
    <location>
        <position position="91"/>
    </location>
</feature>
<feature type="modified residue" description="Phosphohistidine; by HPr" evidence="1">
    <location>
        <position position="10"/>
    </location>
</feature>
<feature type="modified residue" description="Phosphohistidine; by EIIA" evidence="1 3">
    <location>
        <position position="181"/>
    </location>
</feature>
<feature type="sequence conflict" description="In Ref. 2; AA sequence." evidence="5" ref="2">
    <original>S</original>
    <variation>G</variation>
    <location>
        <position position="304"/>
    </location>
</feature>
<sequence>MGIGIIIASHGKFAEGIHQSGSMIFGEQEKVQVVTFMPNEGPDDLYGHFNNAIQQFDADDEILVLADLWSGSPFNQASRVAGENPDRKMAIITGLNLPMLIQAYTERLMDAGAGIEQVAANIIKESKDGIKALPEDLNPVEETAATEKVVNALQGAIPAGTVIGDGKLKINLARVDTRLLHGQVATAWTPASKADRIIVASDEVAQDDLRKQLIKQAAPGGVKANVVPISKLIEASKDPRFGNTHALILFQTPQDALRAVEGGVEINELNVGSMAHSTGKTMVNNVLSMDKEDVATFEKLRDLSVTFDVRKVPNDSKKNLFELIQKANIK</sequence>
<proteinExistence type="evidence at protein level"/>
<reference evidence="6" key="1">
    <citation type="journal article" date="2004" name="J. Infect. Dis.">
        <title>Progress toward characterization of the group A Streptococcus metagenome: complete genome sequence of a macrolide-resistant serotype M6 strain.</title>
        <authorList>
            <person name="Banks D.J."/>
            <person name="Porcella S.F."/>
            <person name="Barbian K.D."/>
            <person name="Beres S.B."/>
            <person name="Philips L.E."/>
            <person name="Voyich J.M."/>
            <person name="DeLeo F.R."/>
            <person name="Martin J.M."/>
            <person name="Somerville G.A."/>
            <person name="Musser J.M."/>
        </authorList>
    </citation>
    <scope>NUCLEOTIDE SEQUENCE [LARGE SCALE GENOMIC DNA]</scope>
    <source>
        <strain>ATCC BAA-946 / MGAS10394</strain>
    </source>
</reference>
<reference key="2">
    <citation type="submission" date="2000-05" db="UniProtKB">
        <title>Two-dimensional gel electrophoresis map of Streptococcus pyogenes proteins.</title>
        <authorList>
            <person name="Hogan D.A."/>
            <person name="Du P."/>
            <person name="Stevenson T.I."/>
            <person name="Whitton M."/>
            <person name="Kilby G.W."/>
            <person name="Rogers J."/>
            <person name="VanBogelen R.A."/>
        </authorList>
    </citation>
    <scope>PROTEIN SEQUENCE OF 13-30; 132-169; 197-211; 241-280; 300-310 AND 319-326</scope>
    <source>
        <strain evidence="4">JRS4 / Serotype M6</strain>
    </source>
</reference>
<accession>Q5XAF5</accession>
<accession>P82545</accession>
<name>PTNAB_STRP6</name>
<evidence type="ECO:0000250" key="1">
    <source>
        <dbReference type="UniProtKB" id="P69797"/>
    </source>
</evidence>
<evidence type="ECO:0000255" key="2">
    <source>
        <dbReference type="PROSITE-ProRule" id="PRU00419"/>
    </source>
</evidence>
<evidence type="ECO:0000255" key="3">
    <source>
        <dbReference type="PROSITE-ProRule" id="PRU00424"/>
    </source>
</evidence>
<evidence type="ECO:0000269" key="4">
    <source ref="2"/>
</evidence>
<evidence type="ECO:0000305" key="5"/>
<evidence type="ECO:0000312" key="6">
    <source>
        <dbReference type="EMBL" id="AAT87608.1"/>
    </source>
</evidence>
<dbReference type="EC" id="2.7.1.191" evidence="1"/>
<dbReference type="EMBL" id="CP000003">
    <property type="protein sequence ID" value="AAT87608.1"/>
    <property type="molecule type" value="Genomic_DNA"/>
</dbReference>
<dbReference type="RefSeq" id="WP_011184868.1">
    <property type="nucleotide sequence ID" value="NC_006086.1"/>
</dbReference>
<dbReference type="SMR" id="Q5XAF5"/>
<dbReference type="KEGG" id="spa:M6_Spy1473"/>
<dbReference type="HOGENOM" id="CLU_074797_0_0_9"/>
<dbReference type="Proteomes" id="UP000001167">
    <property type="component" value="Chromosome"/>
</dbReference>
<dbReference type="GO" id="GO:0005737">
    <property type="term" value="C:cytoplasm"/>
    <property type="evidence" value="ECO:0007669"/>
    <property type="project" value="UniProtKB-SubCell"/>
</dbReference>
<dbReference type="GO" id="GO:0005886">
    <property type="term" value="C:plasma membrane"/>
    <property type="evidence" value="ECO:0007669"/>
    <property type="project" value="UniProtKB-SubCell"/>
</dbReference>
<dbReference type="GO" id="GO:0016301">
    <property type="term" value="F:kinase activity"/>
    <property type="evidence" value="ECO:0007669"/>
    <property type="project" value="UniProtKB-KW"/>
</dbReference>
<dbReference type="GO" id="GO:0008982">
    <property type="term" value="F:protein-N(PI)-phosphohistidine-sugar phosphotransferase activity"/>
    <property type="evidence" value="ECO:0007669"/>
    <property type="project" value="InterPro"/>
</dbReference>
<dbReference type="GO" id="GO:0009401">
    <property type="term" value="P:phosphoenolpyruvate-dependent sugar phosphotransferase system"/>
    <property type="evidence" value="ECO:0007669"/>
    <property type="project" value="UniProtKB-KW"/>
</dbReference>
<dbReference type="CDD" id="cd00006">
    <property type="entry name" value="PTS_IIA_man"/>
    <property type="match status" value="1"/>
</dbReference>
<dbReference type="CDD" id="cd00001">
    <property type="entry name" value="PTS_IIB_man"/>
    <property type="match status" value="1"/>
</dbReference>
<dbReference type="Gene3D" id="3.40.50.510">
    <property type="entry name" value="Phosphotransferase system, mannose-type IIA component"/>
    <property type="match status" value="1"/>
</dbReference>
<dbReference type="Gene3D" id="3.40.35.10">
    <property type="entry name" value="Phosphotransferase system, sorbose subfamily IIB component"/>
    <property type="match status" value="1"/>
</dbReference>
<dbReference type="InterPro" id="IPR051471">
    <property type="entry name" value="Bacterial_PTS_sugar_comp"/>
</dbReference>
<dbReference type="InterPro" id="IPR004701">
    <property type="entry name" value="PTS_EIIA_man-typ"/>
</dbReference>
<dbReference type="InterPro" id="IPR036662">
    <property type="entry name" value="PTS_EIIA_man-typ_sf"/>
</dbReference>
<dbReference type="InterPro" id="IPR033887">
    <property type="entry name" value="PTS_IIA_man"/>
</dbReference>
<dbReference type="InterPro" id="IPR004720">
    <property type="entry name" value="PTS_IIB_sorbose-sp"/>
</dbReference>
<dbReference type="InterPro" id="IPR036667">
    <property type="entry name" value="PTS_IIB_sorbose-sp_sf"/>
</dbReference>
<dbReference type="PANTHER" id="PTHR33799">
    <property type="entry name" value="PTS PERMEASE-RELATED-RELATED"/>
    <property type="match status" value="1"/>
</dbReference>
<dbReference type="PANTHER" id="PTHR33799:SF1">
    <property type="entry name" value="PTS SYSTEM MANNOSE-SPECIFIC EIIAB COMPONENT-RELATED"/>
    <property type="match status" value="1"/>
</dbReference>
<dbReference type="Pfam" id="PF03610">
    <property type="entry name" value="EIIA-man"/>
    <property type="match status" value="1"/>
</dbReference>
<dbReference type="Pfam" id="PF03830">
    <property type="entry name" value="PTSIIB_sorb"/>
    <property type="match status" value="1"/>
</dbReference>
<dbReference type="SUPFAM" id="SSF52728">
    <property type="entry name" value="PTS IIb component"/>
    <property type="match status" value="1"/>
</dbReference>
<dbReference type="SUPFAM" id="SSF53062">
    <property type="entry name" value="PTS system fructose IIA component-like"/>
    <property type="match status" value="1"/>
</dbReference>
<dbReference type="PROSITE" id="PS51096">
    <property type="entry name" value="PTS_EIIA_TYPE_4"/>
    <property type="match status" value="1"/>
</dbReference>
<dbReference type="PROSITE" id="PS51101">
    <property type="entry name" value="PTS_EIIB_TYPE_4"/>
    <property type="match status" value="1"/>
</dbReference>
<protein>
    <recommendedName>
        <fullName evidence="1">PTS system mannose-specific EIIAB component</fullName>
        <ecNumber evidence="1">2.7.1.191</ecNumber>
    </recommendedName>
    <alternativeName>
        <fullName evidence="1">EIIAB-Man</fullName>
    </alternativeName>
    <alternativeName>
        <fullName evidence="1">EIII-Man</fullName>
    </alternativeName>
    <domain>
        <recommendedName>
            <fullName evidence="1">Mannose-specific phosphotransferase enzyme IIA component</fullName>
        </recommendedName>
        <alternativeName>
            <fullName evidence="1">PTS system mannose-specific EIIA component</fullName>
        </alternativeName>
    </domain>
    <domain>
        <recommendedName>
            <fullName evidence="1">Mannose-specific phosphotransferase enzyme IIB component</fullName>
        </recommendedName>
        <alternativeName>
            <fullName evidence="1">PTS system mannose-specific EIIB component</fullName>
        </alternativeName>
    </domain>
</protein>
<organism>
    <name type="scientific">Streptococcus pyogenes serotype M6 (strain ATCC BAA-946 / MGAS10394)</name>
    <dbReference type="NCBI Taxonomy" id="286636"/>
    <lineage>
        <taxon>Bacteria</taxon>
        <taxon>Bacillati</taxon>
        <taxon>Bacillota</taxon>
        <taxon>Bacilli</taxon>
        <taxon>Lactobacillales</taxon>
        <taxon>Streptococcaceae</taxon>
        <taxon>Streptococcus</taxon>
    </lineage>
</organism>
<keyword id="KW-1003">Cell membrane</keyword>
<keyword id="KW-0963">Cytoplasm</keyword>
<keyword id="KW-0903">Direct protein sequencing</keyword>
<keyword id="KW-0418">Kinase</keyword>
<keyword id="KW-0472">Membrane</keyword>
<keyword id="KW-0597">Phosphoprotein</keyword>
<keyword id="KW-0598">Phosphotransferase system</keyword>
<keyword id="KW-0762">Sugar transport</keyword>
<keyword id="KW-0808">Transferase</keyword>
<keyword id="KW-0813">Transport</keyword>
<gene>
    <name evidence="1" type="primary">manX</name>
    <name type="ordered locus">M6_Spy1473</name>
</gene>
<comment type="function">
    <text evidence="1">The phosphoenolpyruvate-dependent sugar phosphotransferase system (sugar PTS), a major carbohydrate active transport system, catalyzes the phosphorylation of incoming sugar substrates concomitantly with their translocation across the cell membrane. The enzyme II ManXYZ PTS system is involved in mannose transport.</text>
</comment>
<comment type="catalytic activity">
    <reaction evidence="1">
        <text>D-mannose(out) + N(pros)-phospho-L-histidyl-[protein] = D-mannose 6-phosphate(in) + L-histidyl-[protein]</text>
        <dbReference type="Rhea" id="RHEA:49232"/>
        <dbReference type="Rhea" id="RHEA-COMP:9745"/>
        <dbReference type="Rhea" id="RHEA-COMP:9746"/>
        <dbReference type="ChEBI" id="CHEBI:4208"/>
        <dbReference type="ChEBI" id="CHEBI:29979"/>
        <dbReference type="ChEBI" id="CHEBI:58735"/>
        <dbReference type="ChEBI" id="CHEBI:64837"/>
        <dbReference type="EC" id="2.7.1.191"/>
    </reaction>
</comment>
<comment type="subunit">
    <text evidence="1">Homodimer.</text>
</comment>
<comment type="subcellular location">
    <subcellularLocation>
        <location evidence="1">Cytoplasm</location>
    </subcellularLocation>
    <subcellularLocation>
        <location evidence="1">Cell membrane</location>
    </subcellularLocation>
</comment>
<comment type="domain">
    <text evidence="1 5">The PTS EIIA type-4 domain is phosphorylated by phospho-HPr on a histidyl residue. Then, it transfers the phosphoryl group to the PTS EIIB type-4 domain.</text>
</comment>
<comment type="domain">
    <text evidence="3">The PTS EIIB type-4 domain is phosphorylated by phospho-EIIA on a histidyl residue. Then, it transfers the phosphoryl group to the sugar substrate concomitantly with the sugar uptake processed by the PTS EIIC type-4 domain.</text>
</comment>